<proteinExistence type="inferred from homology"/>
<evidence type="ECO:0000255" key="1">
    <source>
        <dbReference type="HAMAP-Rule" id="MF_00124"/>
    </source>
</evidence>
<dbReference type="EC" id="2.7.1.21" evidence="1"/>
<dbReference type="EMBL" id="CP000020">
    <property type="protein sequence ID" value="AAW86094.1"/>
    <property type="molecule type" value="Genomic_DNA"/>
</dbReference>
<dbReference type="RefSeq" id="WP_011262167.1">
    <property type="nucleotide sequence ID" value="NZ_CAWLES010000001.1"/>
</dbReference>
<dbReference type="RefSeq" id="YP_204982.1">
    <property type="nucleotide sequence ID" value="NC_006840.2"/>
</dbReference>
<dbReference type="SMR" id="Q5E4F2"/>
<dbReference type="STRING" id="312309.VF_1599"/>
<dbReference type="EnsemblBacteria" id="AAW86094">
    <property type="protein sequence ID" value="AAW86094"/>
    <property type="gene ID" value="VF_1599"/>
</dbReference>
<dbReference type="GeneID" id="54164285"/>
<dbReference type="KEGG" id="vfi:VF_1599"/>
<dbReference type="PATRIC" id="fig|312309.11.peg.1620"/>
<dbReference type="eggNOG" id="COG1435">
    <property type="taxonomic scope" value="Bacteria"/>
</dbReference>
<dbReference type="HOGENOM" id="CLU_064400_2_1_6"/>
<dbReference type="OrthoDB" id="9781579at2"/>
<dbReference type="Proteomes" id="UP000000537">
    <property type="component" value="Chromosome I"/>
</dbReference>
<dbReference type="GO" id="GO:0005829">
    <property type="term" value="C:cytosol"/>
    <property type="evidence" value="ECO:0007669"/>
    <property type="project" value="TreeGrafter"/>
</dbReference>
<dbReference type="GO" id="GO:0005524">
    <property type="term" value="F:ATP binding"/>
    <property type="evidence" value="ECO:0007669"/>
    <property type="project" value="UniProtKB-UniRule"/>
</dbReference>
<dbReference type="GO" id="GO:0004797">
    <property type="term" value="F:thymidine kinase activity"/>
    <property type="evidence" value="ECO:0007669"/>
    <property type="project" value="UniProtKB-UniRule"/>
</dbReference>
<dbReference type="GO" id="GO:0008270">
    <property type="term" value="F:zinc ion binding"/>
    <property type="evidence" value="ECO:0007669"/>
    <property type="project" value="UniProtKB-UniRule"/>
</dbReference>
<dbReference type="GO" id="GO:0071897">
    <property type="term" value="P:DNA biosynthetic process"/>
    <property type="evidence" value="ECO:0007669"/>
    <property type="project" value="UniProtKB-KW"/>
</dbReference>
<dbReference type="GO" id="GO:0046104">
    <property type="term" value="P:thymidine metabolic process"/>
    <property type="evidence" value="ECO:0007669"/>
    <property type="project" value="TreeGrafter"/>
</dbReference>
<dbReference type="FunFam" id="3.40.50.300:FF:000323">
    <property type="entry name" value="Thymidine kinase"/>
    <property type="match status" value="1"/>
</dbReference>
<dbReference type="Gene3D" id="3.30.60.20">
    <property type="match status" value="1"/>
</dbReference>
<dbReference type="Gene3D" id="3.40.50.300">
    <property type="entry name" value="P-loop containing nucleotide triphosphate hydrolases"/>
    <property type="match status" value="1"/>
</dbReference>
<dbReference type="HAMAP" id="MF_00124">
    <property type="entry name" value="Thymidine_kinase"/>
    <property type="match status" value="1"/>
</dbReference>
<dbReference type="InterPro" id="IPR027417">
    <property type="entry name" value="P-loop_NTPase"/>
</dbReference>
<dbReference type="InterPro" id="IPR001267">
    <property type="entry name" value="Thymidine_kinase"/>
</dbReference>
<dbReference type="InterPro" id="IPR020633">
    <property type="entry name" value="Thymidine_kinase_CS"/>
</dbReference>
<dbReference type="NCBIfam" id="NF003300">
    <property type="entry name" value="PRK04296.1-5"/>
    <property type="match status" value="1"/>
</dbReference>
<dbReference type="PANTHER" id="PTHR11441">
    <property type="entry name" value="THYMIDINE KINASE"/>
    <property type="match status" value="1"/>
</dbReference>
<dbReference type="PANTHER" id="PTHR11441:SF0">
    <property type="entry name" value="THYMIDINE KINASE, CYTOSOLIC"/>
    <property type="match status" value="1"/>
</dbReference>
<dbReference type="Pfam" id="PF00265">
    <property type="entry name" value="TK"/>
    <property type="match status" value="1"/>
</dbReference>
<dbReference type="PIRSF" id="PIRSF035805">
    <property type="entry name" value="TK_cell"/>
    <property type="match status" value="1"/>
</dbReference>
<dbReference type="SUPFAM" id="SSF57716">
    <property type="entry name" value="Glucocorticoid receptor-like (DNA-binding domain)"/>
    <property type="match status" value="1"/>
</dbReference>
<dbReference type="SUPFAM" id="SSF52540">
    <property type="entry name" value="P-loop containing nucleoside triphosphate hydrolases"/>
    <property type="match status" value="1"/>
</dbReference>
<dbReference type="PROSITE" id="PS00603">
    <property type="entry name" value="TK_CELLULAR_TYPE"/>
    <property type="match status" value="1"/>
</dbReference>
<accession>Q5E4F2</accession>
<protein>
    <recommendedName>
        <fullName evidence="1">Thymidine kinase</fullName>
        <ecNumber evidence="1">2.7.1.21</ecNumber>
    </recommendedName>
</protein>
<feature type="chain" id="PRO_0000175044" description="Thymidine kinase">
    <location>
        <begin position="1"/>
        <end position="192"/>
    </location>
</feature>
<feature type="active site" description="Proton acceptor" evidence="1">
    <location>
        <position position="88"/>
    </location>
</feature>
<feature type="binding site" evidence="1">
    <location>
        <begin position="9"/>
        <end position="16"/>
    </location>
    <ligand>
        <name>ATP</name>
        <dbReference type="ChEBI" id="CHEBI:30616"/>
    </ligand>
</feature>
<feature type="binding site" evidence="1">
    <location>
        <begin position="87"/>
        <end position="90"/>
    </location>
    <ligand>
        <name>ATP</name>
        <dbReference type="ChEBI" id="CHEBI:30616"/>
    </ligand>
</feature>
<feature type="binding site" evidence="1">
    <location>
        <position position="145"/>
    </location>
    <ligand>
        <name>Zn(2+)</name>
        <dbReference type="ChEBI" id="CHEBI:29105"/>
    </ligand>
</feature>
<feature type="binding site" evidence="1">
    <location>
        <position position="147"/>
    </location>
    <ligand>
        <name>Zn(2+)</name>
        <dbReference type="ChEBI" id="CHEBI:29105"/>
    </ligand>
</feature>
<feature type="binding site" evidence="1">
    <location>
        <position position="182"/>
    </location>
    <ligand>
        <name>Zn(2+)</name>
        <dbReference type="ChEBI" id="CHEBI:29105"/>
    </ligand>
</feature>
<feature type="binding site" evidence="1">
    <location>
        <position position="185"/>
    </location>
    <ligand>
        <name>Zn(2+)</name>
        <dbReference type="ChEBI" id="CHEBI:29105"/>
    </ligand>
</feature>
<reference key="1">
    <citation type="journal article" date="2005" name="Proc. Natl. Acad. Sci. U.S.A.">
        <title>Complete genome sequence of Vibrio fischeri: a symbiotic bacterium with pathogenic congeners.</title>
        <authorList>
            <person name="Ruby E.G."/>
            <person name="Urbanowski M."/>
            <person name="Campbell J."/>
            <person name="Dunn A."/>
            <person name="Faini M."/>
            <person name="Gunsalus R."/>
            <person name="Lostroh P."/>
            <person name="Lupp C."/>
            <person name="McCann J."/>
            <person name="Millikan D."/>
            <person name="Schaefer A."/>
            <person name="Stabb E."/>
            <person name="Stevens A."/>
            <person name="Visick K."/>
            <person name="Whistler C."/>
            <person name="Greenberg E.P."/>
        </authorList>
    </citation>
    <scope>NUCLEOTIDE SEQUENCE [LARGE SCALE GENOMIC DNA]</scope>
    <source>
        <strain>ATCC 700601 / ES114</strain>
    </source>
</reference>
<sequence>MAQMYFYYSAMNAGKSTTLLQSSFNYQERGMNPAIFTAAIDDRYGVGKVSSRIGLHAEAHLFNKETNVFDAIKELHEAEKLHCVLIDECQFLTKEQVYQLTEVVDKLNIPALCYGLRTDFLGELFEGSKYLLSWADKLVELKTICHCGRKANMVIRTDEHGVAIADGDQVAIGGNELYVSVCRRHYKEALGK</sequence>
<name>KITH_ALIF1</name>
<gene>
    <name evidence="1" type="primary">tdk</name>
    <name type="ordered locus">VF_1599</name>
</gene>
<comment type="catalytic activity">
    <reaction evidence="1">
        <text>thymidine + ATP = dTMP + ADP + H(+)</text>
        <dbReference type="Rhea" id="RHEA:19129"/>
        <dbReference type="ChEBI" id="CHEBI:15378"/>
        <dbReference type="ChEBI" id="CHEBI:17748"/>
        <dbReference type="ChEBI" id="CHEBI:30616"/>
        <dbReference type="ChEBI" id="CHEBI:63528"/>
        <dbReference type="ChEBI" id="CHEBI:456216"/>
        <dbReference type="EC" id="2.7.1.21"/>
    </reaction>
</comment>
<comment type="subunit">
    <text evidence="1">Homotetramer.</text>
</comment>
<comment type="subcellular location">
    <subcellularLocation>
        <location evidence="1">Cytoplasm</location>
    </subcellularLocation>
</comment>
<comment type="similarity">
    <text evidence="1">Belongs to the thymidine kinase family.</text>
</comment>
<organism>
    <name type="scientific">Aliivibrio fischeri (strain ATCC 700601 / ES114)</name>
    <name type="common">Vibrio fischeri</name>
    <dbReference type="NCBI Taxonomy" id="312309"/>
    <lineage>
        <taxon>Bacteria</taxon>
        <taxon>Pseudomonadati</taxon>
        <taxon>Pseudomonadota</taxon>
        <taxon>Gammaproteobacteria</taxon>
        <taxon>Vibrionales</taxon>
        <taxon>Vibrionaceae</taxon>
        <taxon>Aliivibrio</taxon>
    </lineage>
</organism>
<keyword id="KW-0067">ATP-binding</keyword>
<keyword id="KW-0963">Cytoplasm</keyword>
<keyword id="KW-0237">DNA synthesis</keyword>
<keyword id="KW-0418">Kinase</keyword>
<keyword id="KW-0479">Metal-binding</keyword>
<keyword id="KW-0547">Nucleotide-binding</keyword>
<keyword id="KW-1185">Reference proteome</keyword>
<keyword id="KW-0808">Transferase</keyword>
<keyword id="KW-0862">Zinc</keyword>